<name>FOSB_HUMAN</name>
<organism>
    <name type="scientific">Homo sapiens</name>
    <name type="common">Human</name>
    <dbReference type="NCBI Taxonomy" id="9606"/>
    <lineage>
        <taxon>Eukaryota</taxon>
        <taxon>Metazoa</taxon>
        <taxon>Chordata</taxon>
        <taxon>Craniata</taxon>
        <taxon>Vertebrata</taxon>
        <taxon>Euteleostomi</taxon>
        <taxon>Mammalia</taxon>
        <taxon>Eutheria</taxon>
        <taxon>Euarchontoglires</taxon>
        <taxon>Primates</taxon>
        <taxon>Haplorrhini</taxon>
        <taxon>Catarrhini</taxon>
        <taxon>Hominidae</taxon>
        <taxon>Homo</taxon>
    </lineage>
</organism>
<feature type="chain" id="PRO_0000076476" description="Protein FosB">
    <location>
        <begin position="1"/>
        <end position="338"/>
    </location>
</feature>
<feature type="domain" description="bZIP" evidence="3">
    <location>
        <begin position="155"/>
        <end position="218"/>
    </location>
</feature>
<feature type="region of interest" description="Disordered" evidence="4">
    <location>
        <begin position="1"/>
        <end position="54"/>
    </location>
</feature>
<feature type="region of interest" description="Disordered" evidence="4">
    <location>
        <begin position="79"/>
        <end position="191"/>
    </location>
</feature>
<feature type="region of interest" description="Basic motif" evidence="3">
    <location>
        <begin position="157"/>
        <end position="182"/>
    </location>
</feature>
<feature type="region of interest" description="Leucine-zipper" evidence="3">
    <location>
        <begin position="183"/>
        <end position="211"/>
    </location>
</feature>
<feature type="region of interest" description="Disordered" evidence="4">
    <location>
        <begin position="222"/>
        <end position="276"/>
    </location>
</feature>
<feature type="region of interest" description="Disordered" evidence="4">
    <location>
        <begin position="316"/>
        <end position="338"/>
    </location>
</feature>
<feature type="compositionally biased region" description="Polar residues" evidence="4">
    <location>
        <begin position="13"/>
        <end position="31"/>
    </location>
</feature>
<feature type="compositionally biased region" description="Polar residues" evidence="4">
    <location>
        <begin position="79"/>
        <end position="88"/>
    </location>
</feature>
<feature type="compositionally biased region" description="Gly residues" evidence="4">
    <location>
        <begin position="113"/>
        <end position="124"/>
    </location>
</feature>
<feature type="compositionally biased region" description="Low complexity" evidence="4">
    <location>
        <begin position="125"/>
        <end position="137"/>
    </location>
</feature>
<feature type="compositionally biased region" description="Pro residues" evidence="4">
    <location>
        <begin position="256"/>
        <end position="265"/>
    </location>
</feature>
<feature type="compositionally biased region" description="Polar residues" evidence="4">
    <location>
        <begin position="266"/>
        <end position="276"/>
    </location>
</feature>
<feature type="compositionally biased region" description="Polar residues" evidence="4">
    <location>
        <begin position="318"/>
        <end position="338"/>
    </location>
</feature>
<feature type="modified residue" description="Phosphoserine" evidence="2">
    <location>
        <position position="27"/>
    </location>
</feature>
<feature type="disulfide bond" description="Interchain (with C-285 in JUND)" evidence="7 15 16 17 18">
    <location>
        <position position="172"/>
    </location>
</feature>
<feature type="splice variant" id="VSP_055562" description="In isoform 10." evidence="10">
    <location>
        <begin position="1"/>
        <end position="49"/>
    </location>
</feature>
<feature type="splice variant" id="VSP_055563" description="In isoform 3, isoform 5 and isoform 7." evidence="12">
    <location>
        <begin position="42"/>
        <end position="80"/>
    </location>
</feature>
<feature type="splice variant" id="VSP_055564" description="In isoform 8 and isoform 9." evidence="12">
    <location>
        <begin position="43"/>
        <end position="185"/>
    </location>
</feature>
<feature type="splice variant" id="VSP_046167" description="In isoform 2, isoform 5 and isoform 6." evidence="12">
    <location>
        <begin position="150"/>
        <end position="185"/>
    </location>
</feature>
<feature type="splice variant" id="VSP_061374" description="In isoform 11.">
    <location>
        <begin position="238"/>
        <end position="338"/>
    </location>
</feature>
<feature type="splice variant" id="VSP_055565" description="In isoform 4, isoform 6, isoform 7 and isoform 9." evidence="12">
    <location>
        <begin position="238"/>
        <end position="284"/>
    </location>
</feature>
<feature type="sequence variant" id="VAR_022286" description="In dbSNP:rs28381241." evidence="9">
    <original>G</original>
    <variation>S</variation>
    <location>
        <position position="33"/>
    </location>
</feature>
<feature type="sequence conflict" description="In Ref. 2; AAB53946 and 3; ABW34730/ABW34731/ABW34732/ABW34733/ABW34734/ABW34735/ABW34736/ABW34737." evidence="13" ref="2 3">
    <original>L</original>
    <variation>R</variation>
    <location>
        <position position="338"/>
    </location>
</feature>
<feature type="helix" evidence="24">
    <location>
        <begin position="156"/>
        <end position="216"/>
    </location>
</feature>
<evidence type="ECO:0000250" key="1">
    <source>
        <dbReference type="UniProtKB" id="D3ZLB7"/>
    </source>
</evidence>
<evidence type="ECO:0000250" key="2">
    <source>
        <dbReference type="UniProtKB" id="P13346"/>
    </source>
</evidence>
<evidence type="ECO:0000255" key="3">
    <source>
        <dbReference type="PROSITE-ProRule" id="PRU00978"/>
    </source>
</evidence>
<evidence type="ECO:0000256" key="4">
    <source>
        <dbReference type="SAM" id="MobiDB-lite"/>
    </source>
</evidence>
<evidence type="ECO:0000269" key="5">
    <source>
    </source>
</evidence>
<evidence type="ECO:0000269" key="6">
    <source>
    </source>
</evidence>
<evidence type="ECO:0000269" key="7">
    <source>
    </source>
</evidence>
<evidence type="ECO:0000269" key="8">
    <source>
    </source>
</evidence>
<evidence type="ECO:0000269" key="9">
    <source ref="4"/>
</evidence>
<evidence type="ECO:0000303" key="10">
    <source>
    </source>
</evidence>
<evidence type="ECO:0000303" key="11">
    <source>
    </source>
</evidence>
<evidence type="ECO:0000303" key="12">
    <source ref="3"/>
</evidence>
<evidence type="ECO:0000305" key="13"/>
<evidence type="ECO:0000312" key="14">
    <source>
        <dbReference type="HGNC" id="HGNC:3797"/>
    </source>
</evidence>
<evidence type="ECO:0007744" key="15">
    <source>
        <dbReference type="PDB" id="5VPA"/>
    </source>
</evidence>
<evidence type="ECO:0007744" key="16">
    <source>
        <dbReference type="PDB" id="5VPB"/>
    </source>
</evidence>
<evidence type="ECO:0007744" key="17">
    <source>
        <dbReference type="PDB" id="5VPC"/>
    </source>
</evidence>
<evidence type="ECO:0007744" key="18">
    <source>
        <dbReference type="PDB" id="5VPD"/>
    </source>
</evidence>
<evidence type="ECO:0007744" key="19">
    <source>
        <dbReference type="PDB" id="5VPE"/>
    </source>
</evidence>
<evidence type="ECO:0007744" key="20">
    <source>
        <dbReference type="PDB" id="5VPF"/>
    </source>
</evidence>
<evidence type="ECO:0007744" key="21">
    <source>
        <dbReference type="PDB" id="6UCI"/>
    </source>
</evidence>
<evidence type="ECO:0007744" key="22">
    <source>
        <dbReference type="PDB" id="6UCL"/>
    </source>
</evidence>
<evidence type="ECO:0007744" key="23">
    <source>
        <dbReference type="PDB" id="6UCM"/>
    </source>
</evidence>
<evidence type="ECO:0007829" key="24">
    <source>
        <dbReference type="PDB" id="7UCC"/>
    </source>
</evidence>
<accession>P53539</accession>
<accession>A8K9K5</accession>
<accession>A8VJE1</accession>
<accession>A8VJE6</accession>
<accession>A8VJF0</accession>
<accession>A8VJF3</accession>
<accession>A8VJF7</accession>
<accession>A8VJG1</accession>
<accession>A8VJG5</accession>
<accession>A8VJG9</accession>
<accession>E7EPR6</accession>
<accession>E9PHJ3</accession>
<accession>K7EKC1</accession>
<accession>K7EMJ6</accession>
<accession>Q49AD7</accession>
<reference key="1">
    <citation type="journal article" date="1992" name="Nat. Genet.">
        <title>Automated DNA sequencing and analysis of 106 kilobases from human chromosome 19q13.3.</title>
        <authorList>
            <person name="Martin-Gallardo A."/>
            <person name="McCombie W.R."/>
            <person name="Gocayne J.D."/>
            <person name="Fitzgerald M.G."/>
            <person name="Wallace S."/>
            <person name="Lee B.M."/>
            <person name="Lamerdin J.E."/>
            <person name="Trapp S."/>
            <person name="Kelley J.M."/>
            <person name="Liu L.-I."/>
            <person name="Dubnick M."/>
            <person name="Johnston-Dow L.A."/>
            <person name="Kerlavage A.R."/>
            <person name="de Jong P."/>
            <person name="Carrano A."/>
            <person name="Fields C."/>
            <person name="Venter J.C."/>
        </authorList>
    </citation>
    <scope>NUCLEOTIDE SEQUENCE [GENOMIC DNA]</scope>
</reference>
<reference key="2">
    <citation type="journal article" date="1996" name="DNA Cell Biol.">
        <title>Sequence analysis and expression in cultured lymphocytes of the human FOSB gene (G0S3).</title>
        <authorList>
            <person name="Heximer S.P."/>
            <person name="Cristillo A.D."/>
            <person name="Russell L."/>
            <person name="Forsdyke D.R."/>
        </authorList>
    </citation>
    <scope>NUCLEOTIDE SEQUENCE [MRNA] (ISOFORM 1)</scope>
    <source>
        <tissue>Blood</tissue>
    </source>
</reference>
<reference key="3">
    <citation type="submission" date="2007-09" db="EMBL/GenBank/DDBJ databases">
        <title>Novel transcript variants of human FOSB gene.</title>
        <authorList>
            <person name="Xiong F."/>
            <person name="Zeng Z."/>
            <person name="Xiong W."/>
        </authorList>
    </citation>
    <scope>NUCLEOTIDE SEQUENCE [MRNA] (ISOFORMS 2; 3; 4; 5; 6; 7; 8 AND 9)</scope>
    <scope>ALTERNATIVE SPLICING</scope>
</reference>
<reference key="4">
    <citation type="submission" date="2005-01" db="EMBL/GenBank/DDBJ databases">
        <authorList>
            <consortium name="NIEHS SNPs program"/>
        </authorList>
    </citation>
    <scope>NUCLEOTIDE SEQUENCE [GENOMIC DNA]</scope>
    <scope>VARIANT SER-33</scope>
</reference>
<reference key="5">
    <citation type="journal article" date="2004" name="Nat. Genet.">
        <title>Complete sequencing and characterization of 21,243 full-length human cDNAs.</title>
        <authorList>
            <person name="Ota T."/>
            <person name="Suzuki Y."/>
            <person name="Nishikawa T."/>
            <person name="Otsuki T."/>
            <person name="Sugiyama T."/>
            <person name="Irie R."/>
            <person name="Wakamatsu A."/>
            <person name="Hayashi K."/>
            <person name="Sato H."/>
            <person name="Nagai K."/>
            <person name="Kimura K."/>
            <person name="Makita H."/>
            <person name="Sekine M."/>
            <person name="Obayashi M."/>
            <person name="Nishi T."/>
            <person name="Shibahara T."/>
            <person name="Tanaka T."/>
            <person name="Ishii S."/>
            <person name="Yamamoto J."/>
            <person name="Saito K."/>
            <person name="Kawai Y."/>
            <person name="Isono Y."/>
            <person name="Nakamura Y."/>
            <person name="Nagahari K."/>
            <person name="Murakami K."/>
            <person name="Yasuda T."/>
            <person name="Iwayanagi T."/>
            <person name="Wagatsuma M."/>
            <person name="Shiratori A."/>
            <person name="Sudo H."/>
            <person name="Hosoiri T."/>
            <person name="Kaku Y."/>
            <person name="Kodaira H."/>
            <person name="Kondo H."/>
            <person name="Sugawara M."/>
            <person name="Takahashi M."/>
            <person name="Kanda K."/>
            <person name="Yokoi T."/>
            <person name="Furuya T."/>
            <person name="Kikkawa E."/>
            <person name="Omura Y."/>
            <person name="Abe K."/>
            <person name="Kamihara K."/>
            <person name="Katsuta N."/>
            <person name="Sato K."/>
            <person name="Tanikawa M."/>
            <person name="Yamazaki M."/>
            <person name="Ninomiya K."/>
            <person name="Ishibashi T."/>
            <person name="Yamashita H."/>
            <person name="Murakawa K."/>
            <person name="Fujimori K."/>
            <person name="Tanai H."/>
            <person name="Kimata M."/>
            <person name="Watanabe M."/>
            <person name="Hiraoka S."/>
            <person name="Chiba Y."/>
            <person name="Ishida S."/>
            <person name="Ono Y."/>
            <person name="Takiguchi S."/>
            <person name="Watanabe S."/>
            <person name="Yosida M."/>
            <person name="Hotuta T."/>
            <person name="Kusano J."/>
            <person name="Kanehori K."/>
            <person name="Takahashi-Fujii A."/>
            <person name="Hara H."/>
            <person name="Tanase T.-O."/>
            <person name="Nomura Y."/>
            <person name="Togiya S."/>
            <person name="Komai F."/>
            <person name="Hara R."/>
            <person name="Takeuchi K."/>
            <person name="Arita M."/>
            <person name="Imose N."/>
            <person name="Musashino K."/>
            <person name="Yuuki H."/>
            <person name="Oshima A."/>
            <person name="Sasaki N."/>
            <person name="Aotsuka S."/>
            <person name="Yoshikawa Y."/>
            <person name="Matsunawa H."/>
            <person name="Ichihara T."/>
            <person name="Shiohata N."/>
            <person name="Sano S."/>
            <person name="Moriya S."/>
            <person name="Momiyama H."/>
            <person name="Satoh N."/>
            <person name="Takami S."/>
            <person name="Terashima Y."/>
            <person name="Suzuki O."/>
            <person name="Nakagawa S."/>
            <person name="Senoh A."/>
            <person name="Mizoguchi H."/>
            <person name="Goto Y."/>
            <person name="Shimizu F."/>
            <person name="Wakebe H."/>
            <person name="Hishigaki H."/>
            <person name="Watanabe T."/>
            <person name="Sugiyama A."/>
            <person name="Takemoto M."/>
            <person name="Kawakami B."/>
            <person name="Yamazaki M."/>
            <person name="Watanabe K."/>
            <person name="Kumagai A."/>
            <person name="Itakura S."/>
            <person name="Fukuzumi Y."/>
            <person name="Fujimori Y."/>
            <person name="Komiyama M."/>
            <person name="Tashiro H."/>
            <person name="Tanigami A."/>
            <person name="Fujiwara T."/>
            <person name="Ono T."/>
            <person name="Yamada K."/>
            <person name="Fujii Y."/>
            <person name="Ozaki K."/>
            <person name="Hirao M."/>
            <person name="Ohmori Y."/>
            <person name="Kawabata A."/>
            <person name="Hikiji T."/>
            <person name="Kobatake N."/>
            <person name="Inagaki H."/>
            <person name="Ikema Y."/>
            <person name="Okamoto S."/>
            <person name="Okitani R."/>
            <person name="Kawakami T."/>
            <person name="Noguchi S."/>
            <person name="Itoh T."/>
            <person name="Shigeta K."/>
            <person name="Senba T."/>
            <person name="Matsumura K."/>
            <person name="Nakajima Y."/>
            <person name="Mizuno T."/>
            <person name="Morinaga M."/>
            <person name="Sasaki M."/>
            <person name="Togashi T."/>
            <person name="Oyama M."/>
            <person name="Hata H."/>
            <person name="Watanabe M."/>
            <person name="Komatsu T."/>
            <person name="Mizushima-Sugano J."/>
            <person name="Satoh T."/>
            <person name="Shirai Y."/>
            <person name="Takahashi Y."/>
            <person name="Nakagawa K."/>
            <person name="Okumura K."/>
            <person name="Nagase T."/>
            <person name="Nomura N."/>
            <person name="Kikuchi H."/>
            <person name="Masuho Y."/>
            <person name="Yamashita R."/>
            <person name="Nakai K."/>
            <person name="Yada T."/>
            <person name="Nakamura Y."/>
            <person name="Ohara O."/>
            <person name="Isogai T."/>
            <person name="Sugano S."/>
        </authorList>
    </citation>
    <scope>NUCLEOTIDE SEQUENCE [LARGE SCALE MRNA] (ISOFORM 1)</scope>
    <source>
        <tissue>Thyroid</tissue>
    </source>
</reference>
<reference key="6">
    <citation type="journal article" date="2004" name="Nature">
        <title>The DNA sequence and biology of human chromosome 19.</title>
        <authorList>
            <person name="Grimwood J."/>
            <person name="Gordon L.A."/>
            <person name="Olsen A.S."/>
            <person name="Terry A."/>
            <person name="Schmutz J."/>
            <person name="Lamerdin J.E."/>
            <person name="Hellsten U."/>
            <person name="Goodstein D."/>
            <person name="Couronne O."/>
            <person name="Tran-Gyamfi M."/>
            <person name="Aerts A."/>
            <person name="Altherr M."/>
            <person name="Ashworth L."/>
            <person name="Bajorek E."/>
            <person name="Black S."/>
            <person name="Branscomb E."/>
            <person name="Caenepeel S."/>
            <person name="Carrano A.V."/>
            <person name="Caoile C."/>
            <person name="Chan Y.M."/>
            <person name="Christensen M."/>
            <person name="Cleland C.A."/>
            <person name="Copeland A."/>
            <person name="Dalin E."/>
            <person name="Dehal P."/>
            <person name="Denys M."/>
            <person name="Detter J.C."/>
            <person name="Escobar J."/>
            <person name="Flowers D."/>
            <person name="Fotopulos D."/>
            <person name="Garcia C."/>
            <person name="Georgescu A.M."/>
            <person name="Glavina T."/>
            <person name="Gomez M."/>
            <person name="Gonzales E."/>
            <person name="Groza M."/>
            <person name="Hammon N."/>
            <person name="Hawkins T."/>
            <person name="Haydu L."/>
            <person name="Ho I."/>
            <person name="Huang W."/>
            <person name="Israni S."/>
            <person name="Jett J."/>
            <person name="Kadner K."/>
            <person name="Kimball H."/>
            <person name="Kobayashi A."/>
            <person name="Larionov V."/>
            <person name="Leem S.-H."/>
            <person name="Lopez F."/>
            <person name="Lou Y."/>
            <person name="Lowry S."/>
            <person name="Malfatti S."/>
            <person name="Martinez D."/>
            <person name="McCready P.M."/>
            <person name="Medina C."/>
            <person name="Morgan J."/>
            <person name="Nelson K."/>
            <person name="Nolan M."/>
            <person name="Ovcharenko I."/>
            <person name="Pitluck S."/>
            <person name="Pollard M."/>
            <person name="Popkie A.P."/>
            <person name="Predki P."/>
            <person name="Quan G."/>
            <person name="Ramirez L."/>
            <person name="Rash S."/>
            <person name="Retterer J."/>
            <person name="Rodriguez A."/>
            <person name="Rogers S."/>
            <person name="Salamov A."/>
            <person name="Salazar A."/>
            <person name="She X."/>
            <person name="Smith D."/>
            <person name="Slezak T."/>
            <person name="Solovyev V."/>
            <person name="Thayer N."/>
            <person name="Tice H."/>
            <person name="Tsai M."/>
            <person name="Ustaszewska A."/>
            <person name="Vo N."/>
            <person name="Wagner M."/>
            <person name="Wheeler J."/>
            <person name="Wu K."/>
            <person name="Xie G."/>
            <person name="Yang J."/>
            <person name="Dubchak I."/>
            <person name="Furey T.S."/>
            <person name="DeJong P."/>
            <person name="Dickson M."/>
            <person name="Gordon D."/>
            <person name="Eichler E.E."/>
            <person name="Pennacchio L.A."/>
            <person name="Richardson P."/>
            <person name="Stubbs L."/>
            <person name="Rokhsar D.S."/>
            <person name="Myers R.M."/>
            <person name="Rubin E.M."/>
            <person name="Lucas S.M."/>
        </authorList>
    </citation>
    <scope>NUCLEOTIDE SEQUENCE [LARGE SCALE GENOMIC DNA]</scope>
</reference>
<reference key="7">
    <citation type="submission" date="2005-07" db="EMBL/GenBank/DDBJ databases">
        <authorList>
            <person name="Mural R.J."/>
            <person name="Istrail S."/>
            <person name="Sutton G.G."/>
            <person name="Florea L."/>
            <person name="Halpern A.L."/>
            <person name="Mobarry C.M."/>
            <person name="Lippert R."/>
            <person name="Walenz B."/>
            <person name="Shatkay H."/>
            <person name="Dew I."/>
            <person name="Miller J.R."/>
            <person name="Flanigan M.J."/>
            <person name="Edwards N.J."/>
            <person name="Bolanos R."/>
            <person name="Fasulo D."/>
            <person name="Halldorsson B.V."/>
            <person name="Hannenhalli S."/>
            <person name="Turner R."/>
            <person name="Yooseph S."/>
            <person name="Lu F."/>
            <person name="Nusskern D.R."/>
            <person name="Shue B.C."/>
            <person name="Zheng X.H."/>
            <person name="Zhong F."/>
            <person name="Delcher A.L."/>
            <person name="Huson D.H."/>
            <person name="Kravitz S.A."/>
            <person name="Mouchard L."/>
            <person name="Reinert K."/>
            <person name="Remington K.A."/>
            <person name="Clark A.G."/>
            <person name="Waterman M.S."/>
            <person name="Eichler E.E."/>
            <person name="Adams M.D."/>
            <person name="Hunkapiller M.W."/>
            <person name="Myers E.W."/>
            <person name="Venter J.C."/>
        </authorList>
    </citation>
    <scope>NUCLEOTIDE SEQUENCE [LARGE SCALE GENOMIC DNA]</scope>
</reference>
<reference key="8">
    <citation type="journal article" date="2004" name="Genome Res.">
        <title>The status, quality, and expansion of the NIH full-length cDNA project: the Mammalian Gene Collection (MGC).</title>
        <authorList>
            <consortium name="The MGC Project Team"/>
        </authorList>
    </citation>
    <scope>NUCLEOTIDE SEQUENCE [LARGE SCALE MRNA] (ISOFORMS 1 AND 10)</scope>
    <source>
        <tissue>Blood</tissue>
        <tissue>Brain</tissue>
    </source>
</reference>
<reference key="9">
    <citation type="journal article" date="2003" name="Oncogene">
        <title>An unexpected role for FosB in activation-induced cell death of T cells.</title>
        <authorList>
            <person name="Baumann S."/>
            <person name="Hess J."/>
            <person name="Eichhorst S.T."/>
            <person name="Krueger A."/>
            <person name="Angel P."/>
            <person name="Krammer P.H."/>
            <person name="Kirchhoff S."/>
        </authorList>
    </citation>
    <scope>FUNCTION</scope>
</reference>
<reference key="10">
    <citation type="journal article" date="2010" name="Nat. Neurosci.">
        <title>DeltaFosB in brain reward circuits mediates resilience to stress and antidepressant responses.</title>
        <authorList>
            <person name="Vialou V."/>
            <person name="Robison A.J."/>
            <person name="Laplant Q.C."/>
            <person name="Covington H.E. III"/>
            <person name="Dietz D.M."/>
            <person name="Ohnishi Y.N."/>
            <person name="Mouzon E."/>
            <person name="Rush A.J. III"/>
            <person name="Watts E.L."/>
            <person name="Wallace D.L."/>
            <person name="Iniguez S.D."/>
            <person name="Ohnishi Y.H."/>
            <person name="Steiner M.A."/>
            <person name="Warren B.L."/>
            <person name="Krishnan V."/>
            <person name="Bolanos C.A."/>
            <person name="Neve R.L."/>
            <person name="Ghose S."/>
            <person name="Berton O."/>
            <person name="Tamminga C.A."/>
            <person name="Nestler E.J."/>
        </authorList>
    </citation>
    <scope>TISSUE SPECIFICITY</scope>
</reference>
<reference evidence="15 16 17 18 19 20" key="11">
    <citation type="journal article" date="2017" name="Nucleic Acids Res.">
        <title>Activator Protein-1: redox switch controlling structure and DNA-binding.</title>
        <authorList>
            <person name="Yin Z."/>
            <person name="Machius M."/>
            <person name="Nestler E.J."/>
            <person name="Rudenko G."/>
        </authorList>
    </citation>
    <scope>X-RAY CRYSTALLOGRAPHY (2.05 ANGSTROMS) OF 153-219 IN COMPLEX WITH JUND AND DNA</scope>
    <scope>FUNCTION</scope>
    <scope>SUBUNIT</scope>
    <scope>INTERACTION WITH JUND</scope>
    <scope>DOMAIN</scope>
    <scope>DISULFIDE BOND</scope>
</reference>
<reference evidence="21 22 23" key="12">
    <citation type="journal article" date="2020" name="Curr. Res. Struct. Biol.">
        <title>Self-assembly of the bZIP transcription factor FosB.</title>
        <authorList>
            <person name="Yin Z."/>
            <person name="Venkannagari H."/>
            <person name="Lynch H."/>
            <person name="Aglyamova G."/>
            <person name="Bhandari M."/>
            <person name="Machius M."/>
            <person name="Nestler E.J."/>
            <person name="Robison A.J."/>
            <person name="Rudenko G."/>
        </authorList>
    </citation>
    <scope>X-RAY CRYSTALLOGRAPHY (2.09 ANGSTROMS) OF 153-219</scope>
    <scope>SUBUNIT (ISOFORM 11)</scope>
    <scope>DOMAIN</scope>
</reference>
<dbReference type="EMBL" id="L49169">
    <property type="protein sequence ID" value="AAB53946.1"/>
    <property type="molecule type" value="mRNA"/>
</dbReference>
<dbReference type="EMBL" id="EU178109">
    <property type="protein sequence ID" value="ABW34730.1"/>
    <property type="molecule type" value="mRNA"/>
</dbReference>
<dbReference type="EMBL" id="EU178110">
    <property type="protein sequence ID" value="ABW34731.1"/>
    <property type="molecule type" value="mRNA"/>
</dbReference>
<dbReference type="EMBL" id="EU178111">
    <property type="protein sequence ID" value="ABW34732.1"/>
    <property type="molecule type" value="mRNA"/>
</dbReference>
<dbReference type="EMBL" id="EU178112">
    <property type="protein sequence ID" value="ABW34733.1"/>
    <property type="molecule type" value="mRNA"/>
</dbReference>
<dbReference type="EMBL" id="EU178113">
    <property type="protein sequence ID" value="ABW34734.1"/>
    <property type="molecule type" value="mRNA"/>
</dbReference>
<dbReference type="EMBL" id="EU178114">
    <property type="protein sequence ID" value="ABW34735.1"/>
    <property type="molecule type" value="mRNA"/>
</dbReference>
<dbReference type="EMBL" id="EU178115">
    <property type="protein sequence ID" value="ABW34736.1"/>
    <property type="molecule type" value="mRNA"/>
</dbReference>
<dbReference type="EMBL" id="EU178116">
    <property type="protein sequence ID" value="ABW34737.1"/>
    <property type="molecule type" value="mRNA"/>
</dbReference>
<dbReference type="EMBL" id="AY898963">
    <property type="protein sequence ID" value="AAW65374.1"/>
    <property type="molecule type" value="Genomic_DNA"/>
</dbReference>
<dbReference type="EMBL" id="AK292720">
    <property type="protein sequence ID" value="BAF85409.1"/>
    <property type="molecule type" value="mRNA"/>
</dbReference>
<dbReference type="EMBL" id="AC138128">
    <property type="status" value="NOT_ANNOTATED_CDS"/>
    <property type="molecule type" value="Genomic_DNA"/>
</dbReference>
<dbReference type="EMBL" id="CH471126">
    <property type="protein sequence ID" value="EAW57351.1"/>
    <property type="molecule type" value="Genomic_DNA"/>
</dbReference>
<dbReference type="EMBL" id="BC036724">
    <property type="protein sequence ID" value="AAH36724.1"/>
    <property type="molecule type" value="mRNA"/>
</dbReference>
<dbReference type="EMBL" id="BC040197">
    <property type="protein sequence ID" value="AAH40197.1"/>
    <property type="molecule type" value="mRNA"/>
</dbReference>
<dbReference type="CCDS" id="CCDS12664.1">
    <molecule id="P53539-1"/>
</dbReference>
<dbReference type="CCDS" id="CCDS46113.1">
    <molecule id="P53539-2"/>
</dbReference>
<dbReference type="CCDS" id="CCDS92643.1">
    <molecule id="P53539-11"/>
</dbReference>
<dbReference type="PIR" id="I53043">
    <property type="entry name" value="I53043"/>
</dbReference>
<dbReference type="RefSeq" id="NP_001107643.1">
    <molecule id="P53539-2"/>
    <property type="nucleotide sequence ID" value="NM_001114171.2"/>
</dbReference>
<dbReference type="RefSeq" id="NP_001397998.1">
    <molecule id="P53539-11"/>
    <property type="nucleotide sequence ID" value="NM_001411069.1"/>
</dbReference>
<dbReference type="RefSeq" id="NP_006723.2">
    <molecule id="P53539-1"/>
    <property type="nucleotide sequence ID" value="NM_006732.3"/>
</dbReference>
<dbReference type="RefSeq" id="XP_005258748.1">
    <property type="nucleotide sequence ID" value="XM_005258691.1"/>
</dbReference>
<dbReference type="PDB" id="5VPA">
    <property type="method" value="X-ray"/>
    <property type="resolution" value="2.83 A"/>
    <property type="chains" value="A=153-219"/>
</dbReference>
<dbReference type="PDB" id="5VPB">
    <property type="method" value="X-ray"/>
    <property type="resolution" value="2.69 A"/>
    <property type="chains" value="A/C=153-219"/>
</dbReference>
<dbReference type="PDB" id="5VPC">
    <property type="method" value="X-ray"/>
    <property type="resolution" value="2.50 A"/>
    <property type="chains" value="A/C=153-219"/>
</dbReference>
<dbReference type="PDB" id="5VPD">
    <property type="method" value="X-ray"/>
    <property type="resolution" value="2.79 A"/>
    <property type="chains" value="A/C=153-219"/>
</dbReference>
<dbReference type="PDB" id="5VPE">
    <property type="method" value="X-ray"/>
    <property type="resolution" value="2.05 A"/>
    <property type="chains" value="A/C=153-219"/>
</dbReference>
<dbReference type="PDB" id="5VPF">
    <property type="method" value="X-ray"/>
    <property type="resolution" value="2.69 A"/>
    <property type="chains" value="A/C=153-219"/>
</dbReference>
<dbReference type="PDB" id="6UCI">
    <property type="method" value="X-ray"/>
    <property type="resolution" value="2.09 A"/>
    <property type="chains" value="A/B/C/D=153-219"/>
</dbReference>
<dbReference type="PDB" id="6UCL">
    <property type="method" value="X-ray"/>
    <property type="resolution" value="2.21 A"/>
    <property type="chains" value="A=153-219"/>
</dbReference>
<dbReference type="PDB" id="6UCM">
    <property type="method" value="X-ray"/>
    <property type="resolution" value="2.42 A"/>
    <property type="chains" value="A/B/C=153-219"/>
</dbReference>
<dbReference type="PDB" id="7UCC">
    <property type="method" value="X-ray"/>
    <property type="resolution" value="1.94 A"/>
    <property type="chains" value="F=153-219"/>
</dbReference>
<dbReference type="PDB" id="7UCD">
    <property type="method" value="X-ray"/>
    <property type="resolution" value="3.21 A"/>
    <property type="chains" value="F=153-219"/>
</dbReference>
<dbReference type="PDBsum" id="5VPA"/>
<dbReference type="PDBsum" id="5VPB"/>
<dbReference type="PDBsum" id="5VPC"/>
<dbReference type="PDBsum" id="5VPD"/>
<dbReference type="PDBsum" id="5VPE"/>
<dbReference type="PDBsum" id="5VPF"/>
<dbReference type="PDBsum" id="6UCI"/>
<dbReference type="PDBsum" id="6UCL"/>
<dbReference type="PDBsum" id="6UCM"/>
<dbReference type="PDBsum" id="7UCC"/>
<dbReference type="PDBsum" id="7UCD"/>
<dbReference type="SMR" id="P53539"/>
<dbReference type="BioGRID" id="108637">
    <property type="interactions" value="44"/>
</dbReference>
<dbReference type="CORUM" id="P53539"/>
<dbReference type="DIP" id="DIP-60013N"/>
<dbReference type="FunCoup" id="P53539">
    <property type="interactions" value="2224"/>
</dbReference>
<dbReference type="IntAct" id="P53539">
    <property type="interactions" value="37"/>
</dbReference>
<dbReference type="MINT" id="P53539"/>
<dbReference type="STRING" id="9606.ENSP00000245919"/>
<dbReference type="BindingDB" id="P53539"/>
<dbReference type="ChEMBL" id="CHEMBL4630821"/>
<dbReference type="GlyCosmos" id="P53539">
    <property type="glycosylation" value="2 sites, 1 glycan"/>
</dbReference>
<dbReference type="GlyGen" id="P53539">
    <property type="glycosylation" value="3 sites, 1 O-linked glycan (2 sites)"/>
</dbReference>
<dbReference type="iPTMnet" id="P53539"/>
<dbReference type="PhosphoSitePlus" id="P53539"/>
<dbReference type="BioMuta" id="FOSB"/>
<dbReference type="DMDM" id="1706888"/>
<dbReference type="CPTAC" id="CPTAC-1760"/>
<dbReference type="jPOST" id="P53539"/>
<dbReference type="MassIVE" id="P53539"/>
<dbReference type="PaxDb" id="9606-ENSP00000245919"/>
<dbReference type="PeptideAtlas" id="P53539"/>
<dbReference type="ProteomicsDB" id="17421"/>
<dbReference type="ProteomicsDB" id="20551"/>
<dbReference type="ProteomicsDB" id="56584">
    <molecule id="P53539-1"/>
</dbReference>
<dbReference type="Antibodypedia" id="4139">
    <property type="antibodies" value="557 antibodies from 39 providers"/>
</dbReference>
<dbReference type="DNASU" id="2354"/>
<dbReference type="Ensembl" id="ENST00000353609.8">
    <molecule id="P53539-1"/>
    <property type="protein sequence ID" value="ENSP00000245919.3"/>
    <property type="gene ID" value="ENSG00000125740.15"/>
</dbReference>
<dbReference type="Ensembl" id="ENST00000417353.6">
    <molecule id="P53539-2"/>
    <property type="protein sequence ID" value="ENSP00000407207.1"/>
    <property type="gene ID" value="ENSG00000125740.15"/>
</dbReference>
<dbReference type="Ensembl" id="ENST00000443841.6">
    <molecule id="P53539-8"/>
    <property type="protein sequence ID" value="ENSP00000414177.1"/>
    <property type="gene ID" value="ENSG00000125740.15"/>
</dbReference>
<dbReference type="Ensembl" id="ENST00000585836.5">
    <molecule id="P53539-5"/>
    <property type="protein sequence ID" value="ENSP00000467497.1"/>
    <property type="gene ID" value="ENSG00000125740.15"/>
</dbReference>
<dbReference type="Ensembl" id="ENST00000586615.5">
    <molecule id="P53539-10"/>
    <property type="protein sequence ID" value="ENSP00000468207.1"/>
    <property type="gene ID" value="ENSG00000125740.15"/>
</dbReference>
<dbReference type="Ensembl" id="ENST00000591858.5">
    <molecule id="P53539-3"/>
    <property type="protein sequence ID" value="ENSP00000466530.1"/>
    <property type="gene ID" value="ENSG00000125740.15"/>
</dbReference>
<dbReference type="Ensembl" id="ENST00000592436.5">
    <molecule id="P53539-11"/>
    <property type="protein sequence ID" value="ENSP00000465552.1"/>
    <property type="gene ID" value="ENSG00000125740.15"/>
</dbReference>
<dbReference type="GeneID" id="2354"/>
<dbReference type="KEGG" id="hsa:2354"/>
<dbReference type="MANE-Select" id="ENST00000353609.8">
    <property type="protein sequence ID" value="ENSP00000245919.3"/>
    <property type="RefSeq nucleotide sequence ID" value="NM_006732.3"/>
    <property type="RefSeq protein sequence ID" value="NP_006723.2"/>
</dbReference>
<dbReference type="UCSC" id="uc002pbx.5">
    <molecule id="P53539-1"/>
    <property type="organism name" value="human"/>
</dbReference>
<dbReference type="AGR" id="HGNC:3797"/>
<dbReference type="CTD" id="2354"/>
<dbReference type="DisGeNET" id="2354"/>
<dbReference type="GeneCards" id="FOSB"/>
<dbReference type="HGNC" id="HGNC:3797">
    <property type="gene designation" value="FOSB"/>
</dbReference>
<dbReference type="HPA" id="ENSG00000125740">
    <property type="expression patterns" value="Low tissue specificity"/>
</dbReference>
<dbReference type="MalaCards" id="FOSB"/>
<dbReference type="MIM" id="164772">
    <property type="type" value="gene"/>
</dbReference>
<dbReference type="neXtProt" id="NX_P53539"/>
<dbReference type="OpenTargets" id="ENSG00000125740"/>
<dbReference type="Orphanet" id="675396">
    <property type="disease" value="Epithelioid hemangioma"/>
</dbReference>
<dbReference type="Orphanet" id="673556">
    <property type="disease" value="Pseudomyogenic hemangioendothelioma"/>
</dbReference>
<dbReference type="PharmGKB" id="PA28213"/>
<dbReference type="VEuPathDB" id="HostDB:ENSG00000125740"/>
<dbReference type="eggNOG" id="KOG1414">
    <property type="taxonomic scope" value="Eukaryota"/>
</dbReference>
<dbReference type="GeneTree" id="ENSGT00940000160358"/>
<dbReference type="HOGENOM" id="CLU_049742_4_0_1"/>
<dbReference type="InParanoid" id="P53539"/>
<dbReference type="OMA" id="GCKIPFA"/>
<dbReference type="OrthoDB" id="5866312at2759"/>
<dbReference type="PAN-GO" id="P53539">
    <property type="GO annotations" value="4 GO annotations based on evolutionary models"/>
</dbReference>
<dbReference type="PhylomeDB" id="P53539"/>
<dbReference type="TreeFam" id="TF326301"/>
<dbReference type="PathwayCommons" id="P53539"/>
<dbReference type="Reactome" id="R-HSA-9018519">
    <property type="pathway name" value="Estrogen-dependent gene expression"/>
</dbReference>
<dbReference type="Reactome" id="R-HSA-9031628">
    <property type="pathway name" value="NGF-stimulated transcription"/>
</dbReference>
<dbReference type="SignaLink" id="P53539"/>
<dbReference type="SIGNOR" id="P53539"/>
<dbReference type="BioGRID-ORCS" id="2354">
    <property type="hits" value="18 hits in 1175 CRISPR screens"/>
</dbReference>
<dbReference type="ChiTaRS" id="FOSB">
    <property type="organism name" value="human"/>
</dbReference>
<dbReference type="GeneWiki" id="FOSB"/>
<dbReference type="GenomeRNAi" id="2354"/>
<dbReference type="Pharos" id="P53539">
    <property type="development level" value="Tbio"/>
</dbReference>
<dbReference type="PRO" id="PR:P53539"/>
<dbReference type="Proteomes" id="UP000005640">
    <property type="component" value="Chromosome 19"/>
</dbReference>
<dbReference type="RNAct" id="P53539">
    <property type="molecule type" value="protein"/>
</dbReference>
<dbReference type="Bgee" id="ENSG00000125740">
    <property type="expression patterns" value="Expressed in mucosa of stomach and 169 other cell types or tissues"/>
</dbReference>
<dbReference type="ExpressionAtlas" id="P53539">
    <property type="expression patterns" value="baseline and differential"/>
</dbReference>
<dbReference type="GO" id="GO:0000785">
    <property type="term" value="C:chromatin"/>
    <property type="evidence" value="ECO:0000247"/>
    <property type="project" value="NTNU_SB"/>
</dbReference>
<dbReference type="GO" id="GO:0005829">
    <property type="term" value="C:cytosol"/>
    <property type="evidence" value="ECO:0007669"/>
    <property type="project" value="Ensembl"/>
</dbReference>
<dbReference type="GO" id="GO:0043231">
    <property type="term" value="C:intracellular membrane-bounded organelle"/>
    <property type="evidence" value="ECO:0000314"/>
    <property type="project" value="HPA"/>
</dbReference>
<dbReference type="GO" id="GO:0005654">
    <property type="term" value="C:nucleoplasm"/>
    <property type="evidence" value="ECO:0000314"/>
    <property type="project" value="HPA"/>
</dbReference>
<dbReference type="GO" id="GO:0005634">
    <property type="term" value="C:nucleus"/>
    <property type="evidence" value="ECO:0000314"/>
    <property type="project" value="BHF-UCL"/>
</dbReference>
<dbReference type="GO" id="GO:0003677">
    <property type="term" value="F:DNA binding"/>
    <property type="evidence" value="ECO:0000304"/>
    <property type="project" value="ProtInc"/>
</dbReference>
<dbReference type="GO" id="GO:0001228">
    <property type="term" value="F:DNA-binding transcription activator activity, RNA polymerase II-specific"/>
    <property type="evidence" value="ECO:0007669"/>
    <property type="project" value="Ensembl"/>
</dbReference>
<dbReference type="GO" id="GO:0000981">
    <property type="term" value="F:DNA-binding transcription factor activity, RNA polymerase II-specific"/>
    <property type="evidence" value="ECO:0000247"/>
    <property type="project" value="NTNU_SB"/>
</dbReference>
<dbReference type="GO" id="GO:0000978">
    <property type="term" value="F:RNA polymerase II cis-regulatory region sequence-specific DNA binding"/>
    <property type="evidence" value="ECO:0000318"/>
    <property type="project" value="GO_Central"/>
</dbReference>
<dbReference type="GO" id="GO:1990837">
    <property type="term" value="F:sequence-specific double-stranded DNA binding"/>
    <property type="evidence" value="ECO:0000314"/>
    <property type="project" value="ARUK-UCL"/>
</dbReference>
<dbReference type="GO" id="GO:0048148">
    <property type="term" value="P:behavioral response to cocaine"/>
    <property type="evidence" value="ECO:0007669"/>
    <property type="project" value="Ensembl"/>
</dbReference>
<dbReference type="GO" id="GO:0071277">
    <property type="term" value="P:cellular response to calcium ion"/>
    <property type="evidence" value="ECO:0007669"/>
    <property type="project" value="Ensembl"/>
</dbReference>
<dbReference type="GO" id="GO:0032870">
    <property type="term" value="P:cellular response to hormone stimulus"/>
    <property type="evidence" value="ECO:0007669"/>
    <property type="project" value="Ensembl"/>
</dbReference>
<dbReference type="GO" id="GO:0007565">
    <property type="term" value="P:female pregnancy"/>
    <property type="evidence" value="ECO:0007669"/>
    <property type="project" value="Ensembl"/>
</dbReference>
<dbReference type="GO" id="GO:0000122">
    <property type="term" value="P:negative regulation of transcription by RNA polymerase II"/>
    <property type="evidence" value="ECO:0000304"/>
    <property type="project" value="ProtInc"/>
</dbReference>
<dbReference type="GO" id="GO:0006357">
    <property type="term" value="P:regulation of transcription by RNA polymerase II"/>
    <property type="evidence" value="ECO:0000318"/>
    <property type="project" value="GO_Central"/>
</dbReference>
<dbReference type="GO" id="GO:0001975">
    <property type="term" value="P:response to amphetamine"/>
    <property type="evidence" value="ECO:0007669"/>
    <property type="project" value="Ensembl"/>
</dbReference>
<dbReference type="GO" id="GO:0051591">
    <property type="term" value="P:response to cAMP"/>
    <property type="evidence" value="ECO:0007669"/>
    <property type="project" value="Ensembl"/>
</dbReference>
<dbReference type="GO" id="GO:0051412">
    <property type="term" value="P:response to corticosterone"/>
    <property type="evidence" value="ECO:0007669"/>
    <property type="project" value="Ensembl"/>
</dbReference>
<dbReference type="GO" id="GO:0045471">
    <property type="term" value="P:response to ethanol"/>
    <property type="evidence" value="ECO:0007669"/>
    <property type="project" value="Ensembl"/>
</dbReference>
<dbReference type="GO" id="GO:0009612">
    <property type="term" value="P:response to mechanical stimulus"/>
    <property type="evidence" value="ECO:0007669"/>
    <property type="project" value="Ensembl"/>
</dbReference>
<dbReference type="GO" id="GO:0043278">
    <property type="term" value="P:response to morphine"/>
    <property type="evidence" value="ECO:0007669"/>
    <property type="project" value="Ensembl"/>
</dbReference>
<dbReference type="GO" id="GO:0035094">
    <property type="term" value="P:response to nicotine"/>
    <property type="evidence" value="ECO:0007669"/>
    <property type="project" value="Ensembl"/>
</dbReference>
<dbReference type="GO" id="GO:0032570">
    <property type="term" value="P:response to progesterone"/>
    <property type="evidence" value="ECO:0007669"/>
    <property type="project" value="Ensembl"/>
</dbReference>
<dbReference type="GO" id="GO:0009410">
    <property type="term" value="P:response to xenobiotic stimulus"/>
    <property type="evidence" value="ECO:0007669"/>
    <property type="project" value="Ensembl"/>
</dbReference>
<dbReference type="GO" id="GO:0006366">
    <property type="term" value="P:transcription by RNA polymerase II"/>
    <property type="evidence" value="ECO:0007669"/>
    <property type="project" value="Ensembl"/>
</dbReference>
<dbReference type="CDD" id="cd14721">
    <property type="entry name" value="bZIP_Fos"/>
    <property type="match status" value="1"/>
</dbReference>
<dbReference type="FunFam" id="1.20.5.170:FF:000006">
    <property type="entry name" value="fos-related antigen 2 isoform X1"/>
    <property type="match status" value="1"/>
</dbReference>
<dbReference type="Gene3D" id="1.20.5.170">
    <property type="match status" value="1"/>
</dbReference>
<dbReference type="InterPro" id="IPR000837">
    <property type="entry name" value="AP-1"/>
</dbReference>
<dbReference type="InterPro" id="IPR004827">
    <property type="entry name" value="bZIP"/>
</dbReference>
<dbReference type="InterPro" id="IPR046347">
    <property type="entry name" value="bZIP_sf"/>
</dbReference>
<dbReference type="PANTHER" id="PTHR23351">
    <property type="entry name" value="FOS TRANSCRIPTION FACTOR-RELATED"/>
    <property type="match status" value="1"/>
</dbReference>
<dbReference type="PANTHER" id="PTHR23351:SF3">
    <property type="entry name" value="PROTEIN FOSB"/>
    <property type="match status" value="1"/>
</dbReference>
<dbReference type="Pfam" id="PF00170">
    <property type="entry name" value="bZIP_1"/>
    <property type="match status" value="1"/>
</dbReference>
<dbReference type="PRINTS" id="PR00042">
    <property type="entry name" value="LEUZIPPRFOS"/>
</dbReference>
<dbReference type="SMART" id="SM00338">
    <property type="entry name" value="BRLZ"/>
    <property type="match status" value="1"/>
</dbReference>
<dbReference type="SUPFAM" id="SSF57959">
    <property type="entry name" value="Leucine zipper domain"/>
    <property type="match status" value="1"/>
</dbReference>
<dbReference type="PROSITE" id="PS50217">
    <property type="entry name" value="BZIP"/>
    <property type="match status" value="1"/>
</dbReference>
<dbReference type="PROSITE" id="PS00036">
    <property type="entry name" value="BZIP_BASIC"/>
    <property type="match status" value="1"/>
</dbReference>
<keyword id="KW-0002">3D-structure</keyword>
<keyword id="KW-0025">Alternative splicing</keyword>
<keyword id="KW-1015">Disulfide bond</keyword>
<keyword id="KW-0238">DNA-binding</keyword>
<keyword id="KW-0539">Nucleus</keyword>
<keyword id="KW-0597">Phosphoprotein</keyword>
<keyword id="KW-1267">Proteomics identification</keyword>
<keyword id="KW-1185">Reference proteome</keyword>
<comment type="function">
    <text evidence="2 5 7">Heterodimerizes with proteins of the JUN family to form an AP-1 transcription factor complex, thereby enhancing their DNA binding activity to gene promoters containing an AP-1 consensus sequence 5'-TGA[GC]TCA-3' and enhancing their transcriptional activity (PubMed:12618758, PubMed:28981703). As part of the AP-1 complex, facilitates enhancer selection together with cell-type-specific transcription factors by collaboratively binding to nucleosomal enhancers and recruiting the SWI/SNF (BAF) chromatin remodeling complex to establish accessible chromatin (By similarity). Together with JUN, plays a role in activation-induced cell death of T cells by binding to the AP-1 promoter site of FASLG/CD95L, and inducing its transcription in response to activation of the TCR/CD3 signaling pathway (PubMed:12618758). Exhibits transactivation activity in vitro (By similarity). Involved in the display of nurturing behavior towards newborns (By similarity). May play a role in neurogenesis in the hippocampus and in learning and memory-related tasks by regulating the expression of various genes involved in neurogenesis, depression and epilepsy (By similarity). Implicated in behavioral responses related to morphine reward and spatial memory (By similarity).</text>
</comment>
<comment type="function">
    <molecule>Isoform 11</molecule>
    <text evidence="2">Exhibits lower transactivation activity than isoform 1 in vitro (By similarity). The heterodimer with JUN does not display any transcriptional activity, and may thereby act as an transcriptional inhibitor (By similarity). May be involved in the regulation of neurogenesis in the hippocampus (By similarity). May play a role in synaptic modifications in nucleus accumbens medium spiny neurons and thereby play a role in adaptive and pathological reward-dependent learning, including maladaptive responses involved in drug addiction (By similarity). Seems to be more stably expressed with a half-life of ~9.5 hours in cell culture as compared to 1.5 hours half-life of isoform 1 (By similarity).</text>
</comment>
<comment type="subunit">
    <text evidence="2 7">Heterodimer; binds to DNA as heterodimer (PubMed:28981703). Component of an AP-1 transcription factor complex; composed of FOS-JUN heterodimers (By similarity). As part of the AP-1 transcription factor complex, forms heterodimers with JUN, JUNB or JUND, thereby binding to the AP-1 consensus sequence and stimulating transcription (PubMed:28981703). Interacts with the BAF multiprotein chromatin-remodeling complex subunits SMARCB1 and SMARCD1 (By similarity). Interacts with ARID1A and JUN (By similarity).</text>
</comment>
<comment type="subunit">
    <molecule>Isoform 11</molecule>
    <text evidence="2 8">Homodimer under oxidizing conditions and monomer under reducing conditions (in vitro) (PubMed:32542236). Heterodimer; binds to DNA as heterodimer (By similarity). Forms heterodimers with JUNB, JUN or JUND; thereby binding to the AP-1 consensus sequence but does not stimulate transcription (By similarity). Forms heterodimers with JUND under oxidizing conditions (PubMed:32542236).</text>
</comment>
<comment type="interaction">
    <interactant intactId="EBI-2806743">
        <id>P53539</id>
    </interactant>
    <interactant intactId="EBI-727098">
        <id>P21549</id>
        <label>AGXT</label>
    </interactant>
    <organismsDiffer>false</organismsDiffer>
    <experiments>3</experiments>
</comment>
<comment type="interaction">
    <interactant intactId="EBI-2806743">
        <id>P53539</id>
    </interactant>
    <interactant intactId="EBI-1170906">
        <id>P15336</id>
        <label>ATF2</label>
    </interactant>
    <organismsDiffer>false</organismsDiffer>
    <experiments>5</experiments>
</comment>
<comment type="interaction">
    <interactant intactId="EBI-2806743">
        <id>P53539</id>
    </interactant>
    <interactant intactId="EBI-745954">
        <id>Q9BU64</id>
        <label>CENPO</label>
    </interactant>
    <organismsDiffer>false</organismsDiffer>
    <experiments>3</experiments>
</comment>
<comment type="interaction">
    <interactant intactId="EBI-2806743">
        <id>P53539</id>
    </interactant>
    <interactant intactId="EBI-10192698">
        <id>Q02930-3</id>
        <label>CREB5</label>
    </interactant>
    <organismsDiffer>false</organismsDiffer>
    <experiments>3</experiments>
</comment>
<comment type="interaction">
    <interactant intactId="EBI-2806743">
        <id>P53539</id>
    </interactant>
    <interactant intactId="EBI-11521003">
        <id>Q9UIA0</id>
        <label>CYTH4</label>
    </interactant>
    <organismsDiffer>false</organismsDiffer>
    <experiments>3</experiments>
</comment>
<comment type="interaction">
    <interactant intactId="EBI-2806743">
        <id>P53539</id>
    </interactant>
    <interactant intactId="EBI-744099">
        <id>Q9H0I2</id>
        <label>ENKD1</label>
    </interactant>
    <organismsDiffer>false</organismsDiffer>
    <experiments>3</experiments>
</comment>
<comment type="interaction">
    <interactant intactId="EBI-2806743">
        <id>P53539</id>
    </interactant>
    <interactant intactId="EBI-2807642">
        <id>Q8WU58</id>
        <label>FAM222B</label>
    </interactant>
    <organismsDiffer>false</organismsDiffer>
    <experiments>3</experiments>
</comment>
<comment type="interaction">
    <interactant intactId="EBI-2806743">
        <id>P53539</id>
    </interactant>
    <interactant intactId="EBI-6658203">
        <id>Q86YD7</id>
        <label>FAM90A1</label>
    </interactant>
    <organismsDiffer>false</organismsDiffer>
    <experiments>3</experiments>
</comment>
<comment type="interaction">
    <interactant intactId="EBI-2806743">
        <id>P53539</id>
    </interactant>
    <interactant intactId="EBI-983719">
        <id>Q9BZS1</id>
        <label>FOXP3</label>
    </interactant>
    <organismsDiffer>false</organismsDiffer>
    <experiments>3</experiments>
</comment>
<comment type="interaction">
    <interactant intactId="EBI-2806743">
        <id>P53539</id>
    </interactant>
    <interactant intactId="EBI-7251368">
        <id>Q9BZE0</id>
        <label>GLIS2</label>
    </interactant>
    <organismsDiffer>false</organismsDiffer>
    <experiments>3</experiments>
</comment>
<comment type="interaction">
    <interactant intactId="EBI-2806743">
        <id>P53539</id>
    </interactant>
    <interactant intactId="EBI-748062">
        <id>P17275</id>
        <label>JUNB</label>
    </interactant>
    <organismsDiffer>false</organismsDiffer>
    <experiments>8</experiments>
</comment>
<comment type="interaction">
    <interactant intactId="EBI-2806743">
        <id>P53539</id>
    </interactant>
    <interactant intactId="EBI-713635">
        <id>O43639</id>
        <label>NCK2</label>
    </interactant>
    <organismsDiffer>false</organismsDiffer>
    <experiments>3</experiments>
</comment>
<comment type="interaction">
    <interactant intactId="EBI-2806743">
        <id>P53539</id>
    </interactant>
    <interactant intactId="EBI-11746523">
        <id>Q14511-2</id>
        <label>NEDD9</label>
    </interactant>
    <organismsDiffer>false</organismsDiffer>
    <experiments>3</experiments>
</comment>
<comment type="interaction">
    <interactant intactId="EBI-2806743">
        <id>P53539</id>
    </interactant>
    <interactant intactId="EBI-2007911">
        <id>Q16236</id>
        <label>NFE2L2</label>
    </interactant>
    <organismsDiffer>false</organismsDiffer>
    <experiments>6</experiments>
</comment>
<comment type="interaction">
    <interactant intactId="EBI-2806743">
        <id>P53539</id>
    </interactant>
    <interactant intactId="EBI-14568740">
        <id>B7ZLY0</id>
        <label>PHC2</label>
    </interactant>
    <organismsDiffer>false</organismsDiffer>
    <experiments>3</experiments>
</comment>
<comment type="interaction">
    <interactant intactId="EBI-2806743">
        <id>P53539</id>
    </interactant>
    <interactant intactId="EBI-530034">
        <id>O43189</id>
        <label>PHF1</label>
    </interactant>
    <organismsDiffer>false</organismsDiffer>
    <experiments>3</experiments>
</comment>
<comment type="interaction">
    <interactant intactId="EBI-2806743">
        <id>P53539</id>
    </interactant>
    <interactant intactId="EBI-1389308">
        <id>Q7Z3K3</id>
        <label>POGZ</label>
    </interactant>
    <organismsDiffer>false</organismsDiffer>
    <experiments>3</experiments>
</comment>
<comment type="interaction">
    <interactant intactId="EBI-2806743">
        <id>P53539</id>
    </interactant>
    <interactant intactId="EBI-12029004">
        <id>P78424</id>
        <label>POU6F2</label>
    </interactant>
    <organismsDiffer>false</organismsDiffer>
    <experiments>5</experiments>
</comment>
<comment type="interaction">
    <interactant intactId="EBI-2806743">
        <id>P53539</id>
    </interactant>
    <interactant intactId="EBI-6422642">
        <id>Q01974</id>
        <label>ROR2</label>
    </interactant>
    <organismsDiffer>false</organismsDiffer>
    <experiments>3</experiments>
</comment>
<comment type="interaction">
    <interactant intactId="EBI-2806743">
        <id>P53539</id>
    </interactant>
    <interactant intactId="EBI-752030">
        <id>Q96A09</id>
        <label>TENT5B</label>
    </interactant>
    <organismsDiffer>false</organismsDiffer>
    <experiments>5</experiments>
</comment>
<comment type="interaction">
    <interactant intactId="EBI-2806743">
        <id>P53539</id>
    </interactant>
    <interactant intactId="EBI-11741437">
        <id>Q08117-2</id>
        <label>TLE5</label>
    </interactant>
    <organismsDiffer>false</organismsDiffer>
    <experiments>3</experiments>
</comment>
<comment type="interaction">
    <interactant intactId="EBI-2806743">
        <id>P53539</id>
    </interactant>
    <interactant intactId="EBI-3939165">
        <id>O43711</id>
        <label>TLX3</label>
    </interactant>
    <organismsDiffer>false</organismsDiffer>
    <experiments>3</experiments>
</comment>
<comment type="interaction">
    <interactant intactId="EBI-2806743">
        <id>P53539</id>
    </interactant>
    <interactant intactId="EBI-11980193">
        <id>Q14119</id>
        <label>VEZF1</label>
    </interactant>
    <organismsDiffer>false</organismsDiffer>
    <experiments>3</experiments>
</comment>
<comment type="interaction">
    <interactant intactId="EBI-2806743">
        <id>P53539</id>
    </interactant>
    <interactant intactId="EBI-742550">
        <id>Q96K80</id>
        <label>ZC3H10</label>
    </interactant>
    <organismsDiffer>false</organismsDiffer>
    <experiments>3</experiments>
</comment>
<comment type="subcellular location">
    <subcellularLocation>
        <location evidence="2">Nucleus</location>
    </subcellularLocation>
</comment>
<comment type="alternative products">
    <event type="alternative splicing"/>
    <isoform>
        <id>P53539-1</id>
        <name>1</name>
        <name>FosB-L</name>
        <sequence type="displayed"/>
    </isoform>
    <isoform>
        <id>P53539-2</id>
        <name>2</name>
        <sequence type="described" ref="VSP_046167"/>
    </isoform>
    <isoform>
        <id>P53539-3</id>
        <name>3</name>
        <sequence type="described" ref="VSP_055563"/>
    </isoform>
    <isoform>
        <id>P53539-4</id>
        <name>4</name>
        <sequence type="described" ref="VSP_055565"/>
    </isoform>
    <isoform>
        <id>P53539-5</id>
        <name>5</name>
        <sequence type="described" ref="VSP_055563 VSP_046167"/>
    </isoform>
    <isoform>
        <id>P53539-6</id>
        <name>6</name>
        <sequence type="described" ref="VSP_046167 VSP_055565"/>
    </isoform>
    <isoform>
        <id>P53539-7</id>
        <name>7</name>
        <sequence type="described" ref="VSP_055563 VSP_055565"/>
    </isoform>
    <isoform>
        <id>P53539-8</id>
        <name>8</name>
        <sequence type="described" ref="VSP_055564"/>
    </isoform>
    <isoform>
        <id>P53539-9</id>
        <name>9</name>
        <sequence type="described" ref="VSP_055564 VSP_055565"/>
    </isoform>
    <isoform>
        <id>P53539-10</id>
        <name>10</name>
        <sequence type="described" ref="VSP_055562"/>
    </isoform>
    <isoform>
        <id>P53539-11</id>
        <name>11</name>
        <name evidence="11">deltaFosB</name>
        <sequence type="described" ref="VSP_061374"/>
    </isoform>
</comment>
<comment type="tissue specificity">
    <molecule>Isoform 11</molecule>
    <text evidence="6">Expressed in the nucleus accumbens of the striatum (at protein level).</text>
</comment>
<comment type="domain">
    <text evidence="7 8">Binds DNA via bZIP domain; DNA-binding is under control of cellular redox homeostasis (in vitro) (PubMed:28981703). To enable DNA binding, the bZIP domain must undergo a conformational rearrangement which requires the reduction of the interchain disulfide bond between FosB and JunD (in vitro) (PubMed:28981703). The bZIP domain is able to form homomeric oligomers via formation of interchain disulfide bonds under non-reducing conditions (in vitro) (PubMed:32542236). Under reducing conditions, the disulfide-bonded homomeric species dissociates into monomers (in vitro) (PubMed:32542236).</text>
</comment>
<comment type="PTM">
    <text evidence="1">Phosphorylated.</text>
</comment>
<comment type="PTM">
    <molecule>Isoform 11</molecule>
    <text evidence="2">Phosphorylated at Ser-27 by CSNK2A1; phosphorylation increases protein stability and transactivation potential.</text>
</comment>
<comment type="similarity">
    <text evidence="13">Belongs to the bZIP family. Fos subfamily.</text>
</comment>
<proteinExistence type="evidence at protein level"/>
<sequence>MFQAFPGDYDSGSRCSSSPSAESQYLSSVDSFGSPPTAAASQECAGLGEMPGSFVPTVTAITTSQDLQWLVQPTLISSMAQSQGQPLASQPPVVDPYDMPGTSYSTPGMSGYSSGGASGSGGPSTSGTTSGPGPARPARARPRRPREETLTPEEEEKRRVRRERNKLAAAKCRNRRRELTDRLQAETDQLEEEKAELESEIAELQKEKERLEFVLVAHKPGCKIPYEEGPGPGPLAEVRDLPGSAPAKEDGFSWLLPPPPPPPLPFQTSQDAPPNLTASLFTHSEVQVLGDPFPVVNPSYTSSFVLTCPEVSAFAGAQRTSGSDQPSDPLNSPSLLAL</sequence>
<gene>
    <name type="primary">FOSB</name>
    <name type="synonym">G0S3</name>
</gene>
<protein>
    <recommendedName>
        <fullName evidence="13">Protein FosB</fullName>
    </recommendedName>
    <alternativeName>
        <fullName evidence="14">FosB proto-oncogene, AP-1 transcription factor subunit</fullName>
    </alternativeName>
    <alternativeName>
        <fullName>G0/G1 switch regulatory protein 3</fullName>
    </alternativeName>
    <alternativeName>
        <fullName evidence="13">Transcription factor AP-1 subunit FosB</fullName>
    </alternativeName>
</protein>